<dbReference type="EMBL" id="AE016853">
    <property type="protein sequence ID" value="AAO55329.1"/>
    <property type="molecule type" value="Genomic_DNA"/>
</dbReference>
<dbReference type="RefSeq" id="NP_791634.1">
    <property type="nucleotide sequence ID" value="NC_004578.1"/>
</dbReference>
<dbReference type="RefSeq" id="WP_004396551.1">
    <property type="nucleotide sequence ID" value="NC_004578.1"/>
</dbReference>
<dbReference type="STRING" id="223283.PSPTO_1809"/>
<dbReference type="KEGG" id="pst:PSPTO_1809"/>
<dbReference type="PATRIC" id="fig|223283.9.peg.1838"/>
<dbReference type="eggNOG" id="COG2917">
    <property type="taxonomic scope" value="Bacteria"/>
</dbReference>
<dbReference type="HOGENOM" id="CLU_089554_2_0_6"/>
<dbReference type="OrthoDB" id="9788219at2"/>
<dbReference type="PhylomeDB" id="Q885M2"/>
<dbReference type="Proteomes" id="UP000002515">
    <property type="component" value="Chromosome"/>
</dbReference>
<dbReference type="GO" id="GO:0005886">
    <property type="term" value="C:plasma membrane"/>
    <property type="evidence" value="ECO:0007669"/>
    <property type="project" value="UniProtKB-SubCell"/>
</dbReference>
<dbReference type="HAMAP" id="MF_00189">
    <property type="entry name" value="YciB"/>
    <property type="match status" value="1"/>
</dbReference>
<dbReference type="InterPro" id="IPR006008">
    <property type="entry name" value="YciB"/>
</dbReference>
<dbReference type="NCBIfam" id="TIGR00997">
    <property type="entry name" value="ispZ"/>
    <property type="match status" value="1"/>
</dbReference>
<dbReference type="NCBIfam" id="NF001325">
    <property type="entry name" value="PRK00259.1-3"/>
    <property type="match status" value="1"/>
</dbReference>
<dbReference type="NCBIfam" id="NF001327">
    <property type="entry name" value="PRK00259.1-5"/>
    <property type="match status" value="1"/>
</dbReference>
<dbReference type="PANTHER" id="PTHR36917:SF1">
    <property type="entry name" value="INNER MEMBRANE-SPANNING PROTEIN YCIB"/>
    <property type="match status" value="1"/>
</dbReference>
<dbReference type="PANTHER" id="PTHR36917">
    <property type="entry name" value="INTRACELLULAR SEPTATION PROTEIN A-RELATED"/>
    <property type="match status" value="1"/>
</dbReference>
<dbReference type="Pfam" id="PF04279">
    <property type="entry name" value="IspA"/>
    <property type="match status" value="1"/>
</dbReference>
<protein>
    <recommendedName>
        <fullName evidence="1">Inner membrane-spanning protein YciB</fullName>
    </recommendedName>
</protein>
<proteinExistence type="inferred from homology"/>
<keyword id="KW-0997">Cell inner membrane</keyword>
<keyword id="KW-1003">Cell membrane</keyword>
<keyword id="KW-0472">Membrane</keyword>
<keyword id="KW-1185">Reference proteome</keyword>
<keyword id="KW-0812">Transmembrane</keyword>
<keyword id="KW-1133">Transmembrane helix</keyword>
<evidence type="ECO:0000255" key="1">
    <source>
        <dbReference type="HAMAP-Rule" id="MF_00189"/>
    </source>
</evidence>
<feature type="chain" id="PRO_0000206541" description="Inner membrane-spanning protein YciB">
    <location>
        <begin position="1"/>
        <end position="198"/>
    </location>
</feature>
<feature type="transmembrane region" description="Helical" evidence="1">
    <location>
        <begin position="36"/>
        <end position="56"/>
    </location>
</feature>
<feature type="transmembrane region" description="Helical" evidence="1">
    <location>
        <begin position="67"/>
        <end position="87"/>
    </location>
</feature>
<feature type="transmembrane region" description="Helical" evidence="1">
    <location>
        <begin position="90"/>
        <end position="110"/>
    </location>
</feature>
<feature type="transmembrane region" description="Helical" evidence="1">
    <location>
        <begin position="133"/>
        <end position="153"/>
    </location>
</feature>
<feature type="transmembrane region" description="Helical" evidence="1">
    <location>
        <begin position="162"/>
        <end position="182"/>
    </location>
</feature>
<accession>Q885M2</accession>
<comment type="function">
    <text evidence="1">Plays a role in cell envelope biogenesis, maintenance of cell envelope integrity and membrane homeostasis.</text>
</comment>
<comment type="subcellular location">
    <subcellularLocation>
        <location evidence="1">Cell inner membrane</location>
        <topology evidence="1">Multi-pass membrane protein</topology>
    </subcellularLocation>
</comment>
<comment type="similarity">
    <text evidence="1">Belongs to the YciB family.</text>
</comment>
<gene>
    <name evidence="1" type="primary">yciB</name>
    <name type="ordered locus">PSPTO_1809</name>
</gene>
<name>YCIB_PSESM</name>
<sequence length="198" mass="22489">MKQFIDFIPLLLFFIVYKTEPRAVDILGNSYTFGGIFSATAMLIISSVVVYGILYIKQRKLEKSQWLTLVACLVFGSLTLAFHSETFLKWKAPVVNWLFAVAFAGSHFIGDRPLIQRIMGHALTLPAAIWTRLNIAWIIFFLFCGAANLYVAFTYQEFWVDFKVFGSLGMTLIFLVGQGIYLSRHLHDTTPNTPKSED</sequence>
<organism>
    <name type="scientific">Pseudomonas syringae pv. tomato (strain ATCC BAA-871 / DC3000)</name>
    <dbReference type="NCBI Taxonomy" id="223283"/>
    <lineage>
        <taxon>Bacteria</taxon>
        <taxon>Pseudomonadati</taxon>
        <taxon>Pseudomonadota</taxon>
        <taxon>Gammaproteobacteria</taxon>
        <taxon>Pseudomonadales</taxon>
        <taxon>Pseudomonadaceae</taxon>
        <taxon>Pseudomonas</taxon>
    </lineage>
</organism>
<reference key="1">
    <citation type="journal article" date="2003" name="Proc. Natl. Acad. Sci. U.S.A.">
        <title>The complete genome sequence of the Arabidopsis and tomato pathogen Pseudomonas syringae pv. tomato DC3000.</title>
        <authorList>
            <person name="Buell C.R."/>
            <person name="Joardar V."/>
            <person name="Lindeberg M."/>
            <person name="Selengut J."/>
            <person name="Paulsen I.T."/>
            <person name="Gwinn M.L."/>
            <person name="Dodson R.J."/>
            <person name="DeBoy R.T."/>
            <person name="Durkin A.S."/>
            <person name="Kolonay J.F."/>
            <person name="Madupu R."/>
            <person name="Daugherty S.C."/>
            <person name="Brinkac L.M."/>
            <person name="Beanan M.J."/>
            <person name="Haft D.H."/>
            <person name="Nelson W.C."/>
            <person name="Davidsen T.M."/>
            <person name="Zafar N."/>
            <person name="Zhou L."/>
            <person name="Liu J."/>
            <person name="Yuan Q."/>
            <person name="Khouri H.M."/>
            <person name="Fedorova N.B."/>
            <person name="Tran B."/>
            <person name="Russell D."/>
            <person name="Berry K.J."/>
            <person name="Utterback T.R."/>
            <person name="Van Aken S.E."/>
            <person name="Feldblyum T.V."/>
            <person name="D'Ascenzo M."/>
            <person name="Deng W.-L."/>
            <person name="Ramos A.R."/>
            <person name="Alfano J.R."/>
            <person name="Cartinhour S."/>
            <person name="Chatterjee A.K."/>
            <person name="Delaney T.P."/>
            <person name="Lazarowitz S.G."/>
            <person name="Martin G.B."/>
            <person name="Schneider D.J."/>
            <person name="Tang X."/>
            <person name="Bender C.L."/>
            <person name="White O."/>
            <person name="Fraser C.M."/>
            <person name="Collmer A."/>
        </authorList>
    </citation>
    <scope>NUCLEOTIDE SEQUENCE [LARGE SCALE GENOMIC DNA]</scope>
    <source>
        <strain>ATCC BAA-871 / DC3000</strain>
    </source>
</reference>